<keyword id="KW-0002">3D-structure</keyword>
<keyword id="KW-0007">Acetylation</keyword>
<keyword id="KW-0963">Cytoplasm</keyword>
<keyword id="KW-0206">Cytoskeleton</keyword>
<keyword id="KW-1017">Isopeptide bond</keyword>
<keyword id="KW-0539">Nucleus</keyword>
<keyword id="KW-0597">Phosphoprotein</keyword>
<keyword id="KW-1185">Reference proteome</keyword>
<keyword id="KW-0728">SH3 domain</keyword>
<keyword id="KW-0832">Ubl conjugation</keyword>
<proteinExistence type="evidence at protein level"/>
<dbReference type="EMBL" id="U28371">
    <property type="protein sequence ID" value="AAB68051.1"/>
    <property type="molecule type" value="Genomic_DNA"/>
</dbReference>
<dbReference type="EMBL" id="AY692989">
    <property type="protein sequence ID" value="AAT93008.1"/>
    <property type="molecule type" value="Genomic_DNA"/>
</dbReference>
<dbReference type="EMBL" id="BK006949">
    <property type="protein sequence ID" value="DAA11566.1"/>
    <property type="molecule type" value="Genomic_DNA"/>
</dbReference>
<dbReference type="PIR" id="S61138">
    <property type="entry name" value="S61138"/>
</dbReference>
<dbReference type="RefSeq" id="NP_015480.1">
    <property type="nucleotide sequence ID" value="NM_001184251.1"/>
</dbReference>
<dbReference type="PDB" id="1YNZ">
    <property type="method" value="X-ray"/>
    <property type="resolution" value="2.20 A"/>
    <property type="chains" value="A=57-112"/>
</dbReference>
<dbReference type="PDB" id="1ZX6">
    <property type="method" value="X-ray"/>
    <property type="resolution" value="1.60 A"/>
    <property type="chains" value="A=57-112"/>
</dbReference>
<dbReference type="PDBsum" id="1YNZ"/>
<dbReference type="PDBsum" id="1ZX6"/>
<dbReference type="SMR" id="Q06449"/>
<dbReference type="BioGRID" id="36321">
    <property type="interactions" value="126"/>
</dbReference>
<dbReference type="DIP" id="DIP-6257N"/>
<dbReference type="FunCoup" id="Q06449">
    <property type="interactions" value="147"/>
</dbReference>
<dbReference type="IntAct" id="Q06449">
    <property type="interactions" value="48"/>
</dbReference>
<dbReference type="MINT" id="Q06449"/>
<dbReference type="STRING" id="4932.YPR154W"/>
<dbReference type="MoonDB" id="Q06449">
    <property type="type" value="Predicted"/>
</dbReference>
<dbReference type="iPTMnet" id="Q06449"/>
<dbReference type="PaxDb" id="4932-YPR154W"/>
<dbReference type="PeptideAtlas" id="Q06449"/>
<dbReference type="EnsemblFungi" id="YPR154W_mRNA">
    <property type="protein sequence ID" value="YPR154W"/>
    <property type="gene ID" value="YPR154W"/>
</dbReference>
<dbReference type="GeneID" id="856277"/>
<dbReference type="KEGG" id="sce:YPR154W"/>
<dbReference type="AGR" id="SGD:S000006358"/>
<dbReference type="SGD" id="S000006358">
    <property type="gene designation" value="PIN3"/>
</dbReference>
<dbReference type="VEuPathDB" id="FungiDB:YPR154W"/>
<dbReference type="eggNOG" id="KOG3601">
    <property type="taxonomic scope" value="Eukaryota"/>
</dbReference>
<dbReference type="GeneTree" id="ENSGT00950000182882"/>
<dbReference type="HOGENOM" id="CLU_064525_2_0_1"/>
<dbReference type="InParanoid" id="Q06449"/>
<dbReference type="OMA" id="THIASQT"/>
<dbReference type="OrthoDB" id="6250593at2759"/>
<dbReference type="BioCyc" id="YEAST:G3O-34285-MONOMER"/>
<dbReference type="Reactome" id="R-SCE-6798695">
    <property type="pathway name" value="Neutrophil degranulation"/>
</dbReference>
<dbReference type="Reactome" id="R-SCE-9013424">
    <property type="pathway name" value="RHOV GTPase cycle"/>
</dbReference>
<dbReference type="Reactome" id="R-SCE-983168">
    <property type="pathway name" value="Antigen processing: Ubiquitination &amp; Proteasome degradation"/>
</dbReference>
<dbReference type="BioGRID-ORCS" id="856277">
    <property type="hits" value="1 hit in 10 CRISPR screens"/>
</dbReference>
<dbReference type="EvolutionaryTrace" id="Q06449"/>
<dbReference type="PRO" id="PR:Q06449"/>
<dbReference type="Proteomes" id="UP000002311">
    <property type="component" value="Chromosome XVI"/>
</dbReference>
<dbReference type="RNAct" id="Q06449">
    <property type="molecule type" value="protein"/>
</dbReference>
<dbReference type="GO" id="GO:0030479">
    <property type="term" value="C:actin cortical patch"/>
    <property type="evidence" value="ECO:0000314"/>
    <property type="project" value="SGD"/>
</dbReference>
<dbReference type="GO" id="GO:0005737">
    <property type="term" value="C:cytoplasm"/>
    <property type="evidence" value="ECO:0000314"/>
    <property type="project" value="SGD"/>
</dbReference>
<dbReference type="GO" id="GO:0005634">
    <property type="term" value="C:nucleus"/>
    <property type="evidence" value="ECO:0007005"/>
    <property type="project" value="SGD"/>
</dbReference>
<dbReference type="GO" id="GO:0034316">
    <property type="term" value="P:negative regulation of Arp2/3 complex-mediated actin nucleation"/>
    <property type="evidence" value="ECO:0000314"/>
    <property type="project" value="SGD"/>
</dbReference>
<dbReference type="FunFam" id="2.30.30.40:FF:000274">
    <property type="entry name" value="[PSI+] inducibility protein 3"/>
    <property type="match status" value="1"/>
</dbReference>
<dbReference type="Gene3D" id="2.30.30.40">
    <property type="entry name" value="SH3 Domains"/>
    <property type="match status" value="1"/>
</dbReference>
<dbReference type="InterPro" id="IPR036028">
    <property type="entry name" value="SH3-like_dom_sf"/>
</dbReference>
<dbReference type="InterPro" id="IPR001452">
    <property type="entry name" value="SH3_domain"/>
</dbReference>
<dbReference type="InterPro" id="IPR050670">
    <property type="entry name" value="STAM"/>
</dbReference>
<dbReference type="PANTHER" id="PTHR45929">
    <property type="entry name" value="JAK PATHWAY SIGNAL TRANSDUCTION ADAPTOR MOLECULE"/>
    <property type="match status" value="1"/>
</dbReference>
<dbReference type="PANTHER" id="PTHR45929:SF7">
    <property type="entry name" value="LAS SEVENTEEN-BINDING PROTEIN 1"/>
    <property type="match status" value="1"/>
</dbReference>
<dbReference type="Pfam" id="PF00018">
    <property type="entry name" value="SH3_1"/>
    <property type="match status" value="1"/>
</dbReference>
<dbReference type="PRINTS" id="PR00499">
    <property type="entry name" value="P67PHOX"/>
</dbReference>
<dbReference type="PRINTS" id="PR00452">
    <property type="entry name" value="SH3DOMAIN"/>
</dbReference>
<dbReference type="SMART" id="SM00326">
    <property type="entry name" value="SH3"/>
    <property type="match status" value="1"/>
</dbReference>
<dbReference type="SUPFAM" id="SSF50044">
    <property type="entry name" value="SH3-domain"/>
    <property type="match status" value="1"/>
</dbReference>
<dbReference type="PROSITE" id="PS50002">
    <property type="entry name" value="SH3"/>
    <property type="match status" value="1"/>
</dbReference>
<evidence type="ECO:0000255" key="1">
    <source>
        <dbReference type="PROSITE-ProRule" id="PRU00192"/>
    </source>
</evidence>
<evidence type="ECO:0000256" key="2">
    <source>
        <dbReference type="SAM" id="MobiDB-lite"/>
    </source>
</evidence>
<evidence type="ECO:0000269" key="3">
    <source>
    </source>
</evidence>
<evidence type="ECO:0000269" key="4">
    <source>
    </source>
</evidence>
<evidence type="ECO:0000269" key="5">
    <source>
    </source>
</evidence>
<evidence type="ECO:0000269" key="6">
    <source>
    </source>
</evidence>
<evidence type="ECO:0000269" key="7">
    <source>
    </source>
</evidence>
<evidence type="ECO:0000305" key="8"/>
<evidence type="ECO:0007744" key="9">
    <source>
    </source>
</evidence>
<evidence type="ECO:0007744" key="10">
    <source>
    </source>
</evidence>
<evidence type="ECO:0007744" key="11">
    <source>
    </source>
</evidence>
<evidence type="ECO:0007829" key="12">
    <source>
        <dbReference type="PDB" id="1ZX6"/>
    </source>
</evidence>
<organism>
    <name type="scientific">Saccharomyces cerevisiae (strain ATCC 204508 / S288c)</name>
    <name type="common">Baker's yeast</name>
    <dbReference type="NCBI Taxonomy" id="559292"/>
    <lineage>
        <taxon>Eukaryota</taxon>
        <taxon>Fungi</taxon>
        <taxon>Dikarya</taxon>
        <taxon>Ascomycota</taxon>
        <taxon>Saccharomycotina</taxon>
        <taxon>Saccharomycetes</taxon>
        <taxon>Saccharomycetales</taxon>
        <taxon>Saccharomycetaceae</taxon>
        <taxon>Saccharomyces</taxon>
    </lineage>
</organism>
<reference key="1">
    <citation type="journal article" date="1997" name="Nature">
        <title>The nucleotide sequence of Saccharomyces cerevisiae chromosome XVI.</title>
        <authorList>
            <person name="Bussey H."/>
            <person name="Storms R.K."/>
            <person name="Ahmed A."/>
            <person name="Albermann K."/>
            <person name="Allen E."/>
            <person name="Ansorge W."/>
            <person name="Araujo R."/>
            <person name="Aparicio A."/>
            <person name="Barrell B.G."/>
            <person name="Badcock K."/>
            <person name="Benes V."/>
            <person name="Botstein D."/>
            <person name="Bowman S."/>
            <person name="Brueckner M."/>
            <person name="Carpenter J."/>
            <person name="Cherry J.M."/>
            <person name="Chung E."/>
            <person name="Churcher C.M."/>
            <person name="Coster F."/>
            <person name="Davis K."/>
            <person name="Davis R.W."/>
            <person name="Dietrich F.S."/>
            <person name="Delius H."/>
            <person name="DiPaolo T."/>
            <person name="Dubois E."/>
            <person name="Duesterhoeft A."/>
            <person name="Duncan M."/>
            <person name="Floeth M."/>
            <person name="Fortin N."/>
            <person name="Friesen J.D."/>
            <person name="Fritz C."/>
            <person name="Goffeau A."/>
            <person name="Hall J."/>
            <person name="Hebling U."/>
            <person name="Heumann K."/>
            <person name="Hilbert H."/>
            <person name="Hillier L.W."/>
            <person name="Hunicke-Smith S."/>
            <person name="Hyman R.W."/>
            <person name="Johnston M."/>
            <person name="Kalman S."/>
            <person name="Kleine K."/>
            <person name="Komp C."/>
            <person name="Kurdi O."/>
            <person name="Lashkari D."/>
            <person name="Lew H."/>
            <person name="Lin A."/>
            <person name="Lin D."/>
            <person name="Louis E.J."/>
            <person name="Marathe R."/>
            <person name="Messenguy F."/>
            <person name="Mewes H.-W."/>
            <person name="Mirtipati S."/>
            <person name="Moestl D."/>
            <person name="Mueller-Auer S."/>
            <person name="Namath A."/>
            <person name="Nentwich U."/>
            <person name="Oefner P."/>
            <person name="Pearson D."/>
            <person name="Petel F.X."/>
            <person name="Pohl T.M."/>
            <person name="Purnelle B."/>
            <person name="Rajandream M.A."/>
            <person name="Rechmann S."/>
            <person name="Rieger M."/>
            <person name="Riles L."/>
            <person name="Roberts D."/>
            <person name="Schaefer M."/>
            <person name="Scharfe M."/>
            <person name="Scherens B."/>
            <person name="Schramm S."/>
            <person name="Schroeder M."/>
            <person name="Sdicu A.-M."/>
            <person name="Tettelin H."/>
            <person name="Urrestarazu L.A."/>
            <person name="Ushinsky S."/>
            <person name="Vierendeels F."/>
            <person name="Vissers S."/>
            <person name="Voss H."/>
            <person name="Walsh S.V."/>
            <person name="Wambutt R."/>
            <person name="Wang Y."/>
            <person name="Wedler E."/>
            <person name="Wedler H."/>
            <person name="Winnett E."/>
            <person name="Zhong W.-W."/>
            <person name="Zollner A."/>
            <person name="Vo D.H."/>
            <person name="Hani J."/>
        </authorList>
    </citation>
    <scope>NUCLEOTIDE SEQUENCE [LARGE SCALE GENOMIC DNA]</scope>
    <source>
        <strain>ATCC 204508 / S288c</strain>
    </source>
</reference>
<reference key="2">
    <citation type="journal article" date="2014" name="G3 (Bethesda)">
        <title>The reference genome sequence of Saccharomyces cerevisiae: Then and now.</title>
        <authorList>
            <person name="Engel S.R."/>
            <person name="Dietrich F.S."/>
            <person name="Fisk D.G."/>
            <person name="Binkley G."/>
            <person name="Balakrishnan R."/>
            <person name="Costanzo M.C."/>
            <person name="Dwight S.S."/>
            <person name="Hitz B.C."/>
            <person name="Karra K."/>
            <person name="Nash R.S."/>
            <person name="Weng S."/>
            <person name="Wong E.D."/>
            <person name="Lloyd P."/>
            <person name="Skrzypek M.S."/>
            <person name="Miyasato S.R."/>
            <person name="Simison M."/>
            <person name="Cherry J.M."/>
        </authorList>
    </citation>
    <scope>GENOME REANNOTATION</scope>
    <source>
        <strain>ATCC 204508 / S288c</strain>
    </source>
</reference>
<reference key="3">
    <citation type="journal article" date="2007" name="Genome Res.">
        <title>Approaching a complete repository of sequence-verified protein-encoding clones for Saccharomyces cerevisiae.</title>
        <authorList>
            <person name="Hu Y."/>
            <person name="Rolfs A."/>
            <person name="Bhullar B."/>
            <person name="Murthy T.V.S."/>
            <person name="Zhu C."/>
            <person name="Berger M.F."/>
            <person name="Camargo A.A."/>
            <person name="Kelley F."/>
            <person name="McCarron S."/>
            <person name="Jepson D."/>
            <person name="Richardson A."/>
            <person name="Raphael J."/>
            <person name="Moreira D."/>
            <person name="Taycher E."/>
            <person name="Zuo D."/>
            <person name="Mohr S."/>
            <person name="Kane M.F."/>
            <person name="Williamson J."/>
            <person name="Simpson A.J.G."/>
            <person name="Bulyk M.L."/>
            <person name="Harlow E."/>
            <person name="Marsischky G."/>
            <person name="Kolodner R.D."/>
            <person name="LaBaer J."/>
        </authorList>
    </citation>
    <scope>NUCLEOTIDE SEQUENCE [GENOMIC DNA]</scope>
    <source>
        <strain>ATCC 204508 / S288c</strain>
    </source>
</reference>
<reference key="4">
    <citation type="journal article" date="1999" name="Mol. Biol. Cell">
        <title>The Saccharomyces cerevisiae homologue of human Wiskott-Aldrich syndrome protein Las17p interacts with the Arp2/3 complex.</title>
        <authorList>
            <person name="Madania A."/>
            <person name="Dumoulin P."/>
            <person name="Grava S."/>
            <person name="Kitamoto H."/>
            <person name="Scharer-Brodbeck C."/>
            <person name="Soulard A."/>
            <person name="Moreau V."/>
            <person name="Winsor B."/>
        </authorList>
    </citation>
    <scope>INTERACTION WITH LAS17</scope>
</reference>
<reference key="5">
    <citation type="journal article" date="2001" name="Cell">
        <title>Prions affect the appearance of other prions: the story of [PIN(+)].</title>
        <authorList>
            <person name="Derkatch I.L."/>
            <person name="Bradley M.E."/>
            <person name="Hong J.Y."/>
            <person name="Liebman S.W."/>
        </authorList>
    </citation>
    <scope>PRION FORMATION</scope>
</reference>
<reference key="6">
    <citation type="journal article" date="2003" name="Nature">
        <title>Global analysis of protein localization in budding yeast.</title>
        <authorList>
            <person name="Huh W.-K."/>
            <person name="Falvo J.V."/>
            <person name="Gerke L.C."/>
            <person name="Carroll A.S."/>
            <person name="Howson R.W."/>
            <person name="Weissman J.S."/>
            <person name="O'Shea E.K."/>
        </authorList>
    </citation>
    <scope>SUBCELLULAR LOCATION [LARGE SCALE ANALYSIS]</scope>
</reference>
<reference key="7">
    <citation type="journal article" date="2003" name="Nature">
        <title>Global analysis of protein expression in yeast.</title>
        <authorList>
            <person name="Ghaemmaghami S."/>
            <person name="Huh W.-K."/>
            <person name="Bower K."/>
            <person name="Howson R.W."/>
            <person name="Belle A."/>
            <person name="Dephoure N."/>
            <person name="O'Shea E.K."/>
            <person name="Weissman J.S."/>
        </authorList>
    </citation>
    <scope>LEVEL OF PROTEIN EXPRESSION [LARGE SCALE ANALYSIS]</scope>
</reference>
<reference key="8">
    <citation type="journal article" date="2003" name="Nat. Biotechnol.">
        <title>A proteomics approach to understanding protein ubiquitination.</title>
        <authorList>
            <person name="Peng J."/>
            <person name="Schwartz D."/>
            <person name="Elias J.E."/>
            <person name="Thoreen C.C."/>
            <person name="Cheng D."/>
            <person name="Marsischky G."/>
            <person name="Roelofs J."/>
            <person name="Finley D."/>
            <person name="Gygi S.P."/>
        </authorList>
    </citation>
    <scope>UBIQUITINATION [LARGE SCALE ANALYSIS] AT LYS-80</scope>
    <scope>IDENTIFICATION BY MASS SPECTROMETRY</scope>
    <source>
        <strain>SUB592</strain>
    </source>
</reference>
<reference key="9">
    <citation type="journal article" date="2009" name="Science">
        <title>Global analysis of Cdk1 substrate phosphorylation sites provides insights into evolution.</title>
        <authorList>
            <person name="Holt L.J."/>
            <person name="Tuch B.B."/>
            <person name="Villen J."/>
            <person name="Johnson A.D."/>
            <person name="Gygi S.P."/>
            <person name="Morgan D.O."/>
        </authorList>
    </citation>
    <scope>PHOSPHORYLATION [LARGE SCALE ANALYSIS] AT SER-52 AND SER-55</scope>
    <scope>IDENTIFICATION BY MASS SPECTROMETRY [LARGE SCALE ANALYSIS]</scope>
</reference>
<reference key="10">
    <citation type="journal article" date="2011" name="Eur. J. Cell Biol.">
        <title>Yeast Rsp5 ubiquitin ligase affects the actin cytoskeleton in vivo and in vitro.</title>
        <authorList>
            <person name="Kaminska J."/>
            <person name="Spiess M."/>
            <person name="Stawiecka-Mirota M."/>
            <person name="Monkaityte R."/>
            <person name="Haguenauer-Tsapis R."/>
            <person name="Urban-Grimal D."/>
            <person name="Winsor B."/>
            <person name="Zoladek T."/>
        </authorList>
    </citation>
    <scope>UBIQUITINATION BY RSP5</scope>
    <scope>INTERACTION WITH RSP5</scope>
</reference>
<reference key="11">
    <citation type="journal article" date="2011" name="Mol. Cell">
        <title>Prion induction by the short-lived, stress-induced protein Lsb2 is regulated by ubiquitination and association with the actin cytoskeleton.</title>
        <authorList>
            <person name="Chernova T.A."/>
            <person name="Romanyuk A.V."/>
            <person name="Karpova T.S."/>
            <person name="Shanks J.R."/>
            <person name="Ali M."/>
            <person name="Moffatt N."/>
            <person name="Howie R.L."/>
            <person name="O'Dell A."/>
            <person name="McNally J.G."/>
            <person name="Liebman S.W."/>
            <person name="Chernoff Y.O."/>
            <person name="Wilkinson K.D."/>
        </authorList>
    </citation>
    <scope>FUNCTION</scope>
    <scope>UBIQUITINATION BY RSP5</scope>
    <scope>MUTAGENESIS OF LYS-80; TRP-91; 124-PRO-PRO-125 AND 174-GLN-GLN-175</scope>
    <scope>SUBCELLULAR LOCATION</scope>
    <scope>INDUCTION</scope>
    <scope>INTERACTION WITH LAS17 AND SUP35</scope>
</reference>
<reference key="12">
    <citation type="journal article" date="2012" name="Proc. Natl. Acad. Sci. U.S.A.">
        <title>N-terminal acetylome analyses and functional insights of the N-terminal acetyltransferase NatB.</title>
        <authorList>
            <person name="Van Damme P."/>
            <person name="Lasa M."/>
            <person name="Polevoda B."/>
            <person name="Gazquez C."/>
            <person name="Elosegui-Artola A."/>
            <person name="Kim D.S."/>
            <person name="De Juan-Pardo E."/>
            <person name="Demeyer K."/>
            <person name="Hole K."/>
            <person name="Larrea E."/>
            <person name="Timmerman E."/>
            <person name="Prieto J."/>
            <person name="Arnesen T."/>
            <person name="Sherman F."/>
            <person name="Gevaert K."/>
            <person name="Aldabe R."/>
        </authorList>
    </citation>
    <scope>ACETYLATION [LARGE SCALE ANALYSIS] AT SER-2</scope>
    <scope>CLEAVAGE OF INITIATOR METHIONINE [LARGE SCALE ANALYSIS]</scope>
    <scope>IDENTIFICATION BY MASS SPECTROMETRY [LARGE SCALE ANALYSIS]</scope>
</reference>
<reference key="13">
    <citation type="journal article" date="2012" name="Proteomics">
        <title>Sites of ubiquitin attachment in Saccharomyces cerevisiae.</title>
        <authorList>
            <person name="Starita L.M."/>
            <person name="Lo R.S."/>
            <person name="Eng J.K."/>
            <person name="von Haller P.D."/>
            <person name="Fields S."/>
        </authorList>
    </citation>
    <scope>UBIQUITINATION [LARGE SCALE ANALYSIS] AT LYS-80</scope>
    <scope>IDENTIFICATION BY MASS SPECTROMETRY [LARGE SCALE ANALYSIS]</scope>
</reference>
<reference key="14">
    <citation type="submission" date="2005-06" db="PDB data bank">
        <title>Structural genomics of yeast SH3 domains.</title>
        <authorList>
            <person name="Kursula P."/>
            <person name="Kursula I."/>
            <person name="Lehmann F."/>
            <person name="Zou P."/>
            <person name="Song Y.H."/>
            <person name="Wilmanns M."/>
        </authorList>
    </citation>
    <scope>X-RAY CRYSTALLOGRAPHY (1.60 ANGSTROMS) OF 57-112</scope>
</reference>
<comment type="function">
    <text evidence="6">Overproduction promotes the de novo induction of the [PSI+] prion form of SUP35. The prion-inducing effect depends on the association with the actin cytoskeleton. Also implicated in prion maintenance during heat stress.</text>
</comment>
<comment type="subunit">
    <text evidence="3 6 7">Interacts with LAS17, RSP5 and SUP35.</text>
</comment>
<comment type="interaction">
    <interactant intactId="EBI-35523">
        <id>Q06449</id>
    </interactant>
    <interactant intactId="EBI-28798">
        <id>P53933</id>
        <label>APP1</label>
    </interactant>
    <organismsDiffer>false</organismsDiffer>
    <experiments>4</experiments>
</comment>
<comment type="interaction">
    <interactant intactId="EBI-35523">
        <id>Q06449</id>
    </interactant>
    <interactant intactId="EBI-10022">
        <id>Q12446</id>
        <label>LAS17</label>
    </interactant>
    <organismsDiffer>false</organismsDiffer>
    <experiments>4</experiments>
</comment>
<comment type="interaction">
    <interactant intactId="EBI-35523">
        <id>Q06449</id>
    </interactant>
    <interactant intactId="EBI-23329">
        <id>P53281</id>
        <label>LSB1</label>
    </interactant>
    <organismsDiffer>false</organismsDiffer>
    <experiments>3</experiments>
</comment>
<comment type="interaction">
    <interactant intactId="EBI-35523">
        <id>Q06449</id>
    </interactant>
    <interactant intactId="EBI-25789">
        <id>P47075</id>
        <label>VTC4</label>
    </interactant>
    <organismsDiffer>false</organismsDiffer>
    <experiments>2</experiments>
</comment>
<comment type="interaction">
    <interactant intactId="EBI-35523">
        <id>Q06449</id>
    </interactant>
    <interactant intactId="EBI-25176">
        <id>P40483</id>
        <label>YIL108W</label>
    </interactant>
    <organismsDiffer>false</organismsDiffer>
    <experiments>3</experiments>
</comment>
<comment type="subcellular location">
    <subcellularLocation>
        <location evidence="4">Cytoplasm</location>
    </subcellularLocation>
    <subcellularLocation>
        <location evidence="4">Nucleus</location>
    </subcellularLocation>
    <subcellularLocation>
        <location evidence="6">Cytoplasm</location>
        <location evidence="6">Cytoskeleton</location>
        <location evidence="6">Actin patch</location>
    </subcellularLocation>
    <text evidence="6">When overexpressed, localizes to punctate structures which are reminiscent of cortical actin patches (PubMed:21777813). Transiently colocalizes with SUP35 aggregates during prionogenesis (PubMed:21777813).</text>
</comment>
<comment type="induction">
    <text evidence="6">By heat shock. Can thereby reach physiological protein levels high enough to promote prion-formation.</text>
</comment>
<comment type="domain">
    <text>The PY motif is recognized directly by the WW domains of RSP5.</text>
</comment>
<comment type="PTM">
    <text evidence="6 7">Ubiquitinated by RSP5. Ubiquitination reduces the protein abundance and its prion-inducing ability.</text>
</comment>
<comment type="miscellaneous">
    <text evidence="5">Present with 2190 molecules/cell in log phase SD medium.</text>
</comment>
<comment type="miscellaneous">
    <text>Although this protein promotes prion formation and it has a Asn/Gln-rich prion-like domain, it does not seem to have a prion form by itself.</text>
</comment>
<comment type="similarity">
    <text evidence="8">Belongs to the LSB1 family.</text>
</comment>
<feature type="initiator methionine" description="Removed" evidence="11">
    <location>
        <position position="1"/>
    </location>
</feature>
<feature type="chain" id="PRO_0000268696" description="[PSI+] inducibility protein 3">
    <location>
        <begin position="2"/>
        <end position="215"/>
    </location>
</feature>
<feature type="domain" description="SH3" evidence="1">
    <location>
        <begin position="54"/>
        <end position="113"/>
    </location>
</feature>
<feature type="region of interest" description="Disordered" evidence="2">
    <location>
        <begin position="114"/>
        <end position="189"/>
    </location>
</feature>
<feature type="short sequence motif" description="PY motif">
    <location>
        <begin position="124"/>
        <end position="127"/>
    </location>
</feature>
<feature type="modified residue" description="N-acetylserine" evidence="11">
    <location>
        <position position="2"/>
    </location>
</feature>
<feature type="modified residue" description="Phosphoserine" evidence="9">
    <location>
        <position position="52"/>
    </location>
</feature>
<feature type="modified residue" description="Phosphoserine" evidence="9">
    <location>
        <position position="55"/>
    </location>
</feature>
<feature type="cross-link" description="Glycyl lysine isopeptide (Lys-Gly) (interchain with G-Cter in ubiquitin)" evidence="10">
    <location>
        <position position="80"/>
    </location>
</feature>
<feature type="mutagenesis site" description="Abolishes formation of ubiquitinated protein forms." evidence="6">
    <original>K</original>
    <variation>R</variation>
    <location>
        <position position="80"/>
    </location>
</feature>
<feature type="mutagenesis site" description="Abolishes interaction with LAS17, but not with SUP35. Blocks colocalization with actin, aggregation, and prion-inducing ability." evidence="6">
    <original>W</original>
    <variation>S</variation>
    <location>
        <position position="91"/>
    </location>
</feature>
<feature type="mutagenesis site" description="Abolishes RSP5 binding site and consequently ubiquitination." evidence="6">
    <original>PP</original>
    <variation>AA</variation>
    <location>
        <begin position="124"/>
        <end position="125"/>
    </location>
</feature>
<feature type="mutagenesis site" description="Reduces, but does not abolish the ability to promote [PSI+] induction." evidence="6">
    <original>QQ</original>
    <variation>AA</variation>
    <location>
        <begin position="174"/>
        <end position="175"/>
    </location>
</feature>
<feature type="strand" evidence="12">
    <location>
        <begin position="58"/>
        <end position="61"/>
    </location>
</feature>
<feature type="strand" evidence="12">
    <location>
        <begin position="80"/>
        <end position="86"/>
    </location>
</feature>
<feature type="strand" evidence="12">
    <location>
        <begin position="88"/>
        <end position="96"/>
    </location>
</feature>
<feature type="strand" evidence="12">
    <location>
        <begin position="99"/>
        <end position="104"/>
    </location>
</feature>
<feature type="helix" evidence="12">
    <location>
        <begin position="105"/>
        <end position="107"/>
    </location>
</feature>
<feature type="strand" evidence="12">
    <location>
        <begin position="108"/>
        <end position="110"/>
    </location>
</feature>
<gene>
    <name type="primary">PIN3</name>
    <name type="synonym">LSB2</name>
    <name type="ordered locus">YPR154W</name>
</gene>
<protein>
    <recommendedName>
        <fullName>[PSI+] inducibility protein 3</fullName>
    </recommendedName>
    <alternativeName>
        <fullName>LAS seventeen-binding protein 2</fullName>
        <shortName>LAS17-binding protein 2</shortName>
    </alternativeName>
</protein>
<accession>Q06449</accession>
<accession>D6W4F0</accession>
<sequence>MSASLINRSLTNIRTELDFLKGSNVISNDVYDQINKSLPAKWDPANAPRNASPASLEYVEALYQFDPQQDGDLGLKPGDKVQLLEKLSPEWYKGSCNGRTGIFPANYVKPAFSGSNGPSNLPPPPQYKAQELQQIPTQNSAASSYQQQPFPPPSTNYYQQPQQQPQQAPPPQQQQQQQQHQSSHSHLKSFGSKLGNAAIFGAGASIGSDIVNNIF</sequence>
<name>PIN3_YEAST</name>